<dbReference type="EC" id="6.1.1.11" evidence="1"/>
<dbReference type="EMBL" id="CP000362">
    <property type="protein sequence ID" value="ABG32098.1"/>
    <property type="molecule type" value="Genomic_DNA"/>
</dbReference>
<dbReference type="RefSeq" id="WP_011568715.1">
    <property type="nucleotide sequence ID" value="NC_008209.1"/>
</dbReference>
<dbReference type="SMR" id="Q166J5"/>
<dbReference type="STRING" id="375451.RD1_2541"/>
<dbReference type="KEGG" id="rde:RD1_2541"/>
<dbReference type="eggNOG" id="COG0172">
    <property type="taxonomic scope" value="Bacteria"/>
</dbReference>
<dbReference type="HOGENOM" id="CLU_023797_1_1_5"/>
<dbReference type="OrthoDB" id="9804647at2"/>
<dbReference type="UniPathway" id="UPA00906">
    <property type="reaction ID" value="UER00895"/>
</dbReference>
<dbReference type="Proteomes" id="UP000007029">
    <property type="component" value="Chromosome"/>
</dbReference>
<dbReference type="GO" id="GO:0005737">
    <property type="term" value="C:cytoplasm"/>
    <property type="evidence" value="ECO:0007669"/>
    <property type="project" value="UniProtKB-SubCell"/>
</dbReference>
<dbReference type="GO" id="GO:0005524">
    <property type="term" value="F:ATP binding"/>
    <property type="evidence" value="ECO:0007669"/>
    <property type="project" value="UniProtKB-UniRule"/>
</dbReference>
<dbReference type="GO" id="GO:0004828">
    <property type="term" value="F:serine-tRNA ligase activity"/>
    <property type="evidence" value="ECO:0007669"/>
    <property type="project" value="UniProtKB-UniRule"/>
</dbReference>
<dbReference type="GO" id="GO:0016260">
    <property type="term" value="P:selenocysteine biosynthetic process"/>
    <property type="evidence" value="ECO:0007669"/>
    <property type="project" value="UniProtKB-UniRule"/>
</dbReference>
<dbReference type="GO" id="GO:0006434">
    <property type="term" value="P:seryl-tRNA aminoacylation"/>
    <property type="evidence" value="ECO:0007669"/>
    <property type="project" value="UniProtKB-UniRule"/>
</dbReference>
<dbReference type="CDD" id="cd00770">
    <property type="entry name" value="SerRS_core"/>
    <property type="match status" value="1"/>
</dbReference>
<dbReference type="Gene3D" id="3.30.930.10">
    <property type="entry name" value="Bira Bifunctional Protein, Domain 2"/>
    <property type="match status" value="1"/>
</dbReference>
<dbReference type="Gene3D" id="1.10.287.40">
    <property type="entry name" value="Serine-tRNA synthetase, tRNA binding domain"/>
    <property type="match status" value="1"/>
</dbReference>
<dbReference type="HAMAP" id="MF_00176">
    <property type="entry name" value="Ser_tRNA_synth_type1"/>
    <property type="match status" value="1"/>
</dbReference>
<dbReference type="InterPro" id="IPR002314">
    <property type="entry name" value="aa-tRNA-synt_IIb"/>
</dbReference>
<dbReference type="InterPro" id="IPR006195">
    <property type="entry name" value="aa-tRNA-synth_II"/>
</dbReference>
<dbReference type="InterPro" id="IPR045864">
    <property type="entry name" value="aa-tRNA-synth_II/BPL/LPL"/>
</dbReference>
<dbReference type="InterPro" id="IPR002317">
    <property type="entry name" value="Ser-tRNA-ligase_type_1"/>
</dbReference>
<dbReference type="InterPro" id="IPR015866">
    <property type="entry name" value="Ser-tRNA-synth_1_N"/>
</dbReference>
<dbReference type="InterPro" id="IPR042103">
    <property type="entry name" value="SerRS_1_N_sf"/>
</dbReference>
<dbReference type="InterPro" id="IPR033729">
    <property type="entry name" value="SerRS_core"/>
</dbReference>
<dbReference type="InterPro" id="IPR010978">
    <property type="entry name" value="tRNA-bd_arm"/>
</dbReference>
<dbReference type="NCBIfam" id="TIGR00414">
    <property type="entry name" value="serS"/>
    <property type="match status" value="1"/>
</dbReference>
<dbReference type="PANTHER" id="PTHR43697:SF1">
    <property type="entry name" value="SERINE--TRNA LIGASE"/>
    <property type="match status" value="1"/>
</dbReference>
<dbReference type="PANTHER" id="PTHR43697">
    <property type="entry name" value="SERYL-TRNA SYNTHETASE"/>
    <property type="match status" value="1"/>
</dbReference>
<dbReference type="Pfam" id="PF02403">
    <property type="entry name" value="Seryl_tRNA_N"/>
    <property type="match status" value="1"/>
</dbReference>
<dbReference type="Pfam" id="PF00587">
    <property type="entry name" value="tRNA-synt_2b"/>
    <property type="match status" value="1"/>
</dbReference>
<dbReference type="PIRSF" id="PIRSF001529">
    <property type="entry name" value="Ser-tRNA-synth_IIa"/>
    <property type="match status" value="1"/>
</dbReference>
<dbReference type="PRINTS" id="PR00981">
    <property type="entry name" value="TRNASYNTHSER"/>
</dbReference>
<dbReference type="SUPFAM" id="SSF55681">
    <property type="entry name" value="Class II aaRS and biotin synthetases"/>
    <property type="match status" value="1"/>
</dbReference>
<dbReference type="SUPFAM" id="SSF46589">
    <property type="entry name" value="tRNA-binding arm"/>
    <property type="match status" value="1"/>
</dbReference>
<dbReference type="PROSITE" id="PS50862">
    <property type="entry name" value="AA_TRNA_LIGASE_II"/>
    <property type="match status" value="1"/>
</dbReference>
<proteinExistence type="inferred from homology"/>
<protein>
    <recommendedName>
        <fullName evidence="1">Serine--tRNA ligase</fullName>
        <ecNumber evidence="1">6.1.1.11</ecNumber>
    </recommendedName>
    <alternativeName>
        <fullName evidence="1">Seryl-tRNA synthetase</fullName>
        <shortName evidence="1">SerRS</shortName>
    </alternativeName>
    <alternativeName>
        <fullName evidence="1">Seryl-tRNA(Ser/Sec) synthetase</fullName>
    </alternativeName>
</protein>
<organism>
    <name type="scientific">Roseobacter denitrificans (strain ATCC 33942 / OCh 114)</name>
    <name type="common">Erythrobacter sp. (strain OCh 114)</name>
    <name type="synonym">Roseobacter denitrificans</name>
    <dbReference type="NCBI Taxonomy" id="375451"/>
    <lineage>
        <taxon>Bacteria</taxon>
        <taxon>Pseudomonadati</taxon>
        <taxon>Pseudomonadota</taxon>
        <taxon>Alphaproteobacteria</taxon>
        <taxon>Rhodobacterales</taxon>
        <taxon>Roseobacteraceae</taxon>
        <taxon>Roseobacter</taxon>
    </lineage>
</organism>
<comment type="function">
    <text evidence="1">Catalyzes the attachment of serine to tRNA(Ser). Is also able to aminoacylate tRNA(Sec) with serine, to form the misacylated tRNA L-seryl-tRNA(Sec), which will be further converted into selenocysteinyl-tRNA(Sec).</text>
</comment>
<comment type="catalytic activity">
    <reaction evidence="1">
        <text>tRNA(Ser) + L-serine + ATP = L-seryl-tRNA(Ser) + AMP + diphosphate + H(+)</text>
        <dbReference type="Rhea" id="RHEA:12292"/>
        <dbReference type="Rhea" id="RHEA-COMP:9669"/>
        <dbReference type="Rhea" id="RHEA-COMP:9703"/>
        <dbReference type="ChEBI" id="CHEBI:15378"/>
        <dbReference type="ChEBI" id="CHEBI:30616"/>
        <dbReference type="ChEBI" id="CHEBI:33019"/>
        <dbReference type="ChEBI" id="CHEBI:33384"/>
        <dbReference type="ChEBI" id="CHEBI:78442"/>
        <dbReference type="ChEBI" id="CHEBI:78533"/>
        <dbReference type="ChEBI" id="CHEBI:456215"/>
        <dbReference type="EC" id="6.1.1.11"/>
    </reaction>
</comment>
<comment type="catalytic activity">
    <reaction evidence="1">
        <text>tRNA(Sec) + L-serine + ATP = L-seryl-tRNA(Sec) + AMP + diphosphate + H(+)</text>
        <dbReference type="Rhea" id="RHEA:42580"/>
        <dbReference type="Rhea" id="RHEA-COMP:9742"/>
        <dbReference type="Rhea" id="RHEA-COMP:10128"/>
        <dbReference type="ChEBI" id="CHEBI:15378"/>
        <dbReference type="ChEBI" id="CHEBI:30616"/>
        <dbReference type="ChEBI" id="CHEBI:33019"/>
        <dbReference type="ChEBI" id="CHEBI:33384"/>
        <dbReference type="ChEBI" id="CHEBI:78442"/>
        <dbReference type="ChEBI" id="CHEBI:78533"/>
        <dbReference type="ChEBI" id="CHEBI:456215"/>
        <dbReference type="EC" id="6.1.1.11"/>
    </reaction>
</comment>
<comment type="pathway">
    <text evidence="1">Aminoacyl-tRNA biosynthesis; selenocysteinyl-tRNA(Sec) biosynthesis; L-seryl-tRNA(Sec) from L-serine and tRNA(Sec): step 1/1.</text>
</comment>
<comment type="subunit">
    <text evidence="1">Homodimer. The tRNA molecule binds across the dimer.</text>
</comment>
<comment type="subcellular location">
    <subcellularLocation>
        <location evidence="1">Cytoplasm</location>
    </subcellularLocation>
</comment>
<comment type="domain">
    <text evidence="1">Consists of two distinct domains, a catalytic core and a N-terminal extension that is involved in tRNA binding.</text>
</comment>
<comment type="similarity">
    <text evidence="1">Belongs to the class-II aminoacyl-tRNA synthetase family. Type-1 seryl-tRNA synthetase subfamily.</text>
</comment>
<reference key="1">
    <citation type="journal article" date="2007" name="J. Bacteriol.">
        <title>The complete genome sequence of Roseobacter denitrificans reveals a mixotrophic rather than photosynthetic metabolism.</title>
        <authorList>
            <person name="Swingley W.D."/>
            <person name="Sadekar S."/>
            <person name="Mastrian S.D."/>
            <person name="Matthies H.J."/>
            <person name="Hao J."/>
            <person name="Ramos H."/>
            <person name="Acharya C.R."/>
            <person name="Conrad A.L."/>
            <person name="Taylor H.L."/>
            <person name="Dejesa L.C."/>
            <person name="Shah M.K."/>
            <person name="O'Huallachain M.E."/>
            <person name="Lince M.T."/>
            <person name="Blankenship R.E."/>
            <person name="Beatty J.T."/>
            <person name="Touchman J.W."/>
        </authorList>
    </citation>
    <scope>NUCLEOTIDE SEQUENCE [LARGE SCALE GENOMIC DNA]</scope>
    <source>
        <strain>ATCC 33942 / OCh 114</strain>
    </source>
</reference>
<name>SYS_ROSDO</name>
<gene>
    <name evidence="1" type="primary">serS</name>
    <name type="ordered locus">RD1_2541</name>
</gene>
<keyword id="KW-0030">Aminoacyl-tRNA synthetase</keyword>
<keyword id="KW-0067">ATP-binding</keyword>
<keyword id="KW-0963">Cytoplasm</keyword>
<keyword id="KW-0436">Ligase</keyword>
<keyword id="KW-0547">Nucleotide-binding</keyword>
<keyword id="KW-0648">Protein biosynthesis</keyword>
<keyword id="KW-1185">Reference proteome</keyword>
<evidence type="ECO:0000255" key="1">
    <source>
        <dbReference type="HAMAP-Rule" id="MF_00176"/>
    </source>
</evidence>
<accession>Q166J5</accession>
<sequence>MHDIRAIRENPAAFDAALARRGEAPMSQAILALDTARRAKINAAENAQAEQNKASKEVGQAKAQGDEATFEKLRALVSEKKALVAEMQADAKALDAELTEKLSWIANIPADDVPDGADEDDNVEVRRWGHLPDFEFTPKEHYEIGGVAASMDFDTAAKTSGARFVMLKGAVARIHRALSQFMIDTHVDHNGLTEINSPVLVRDDAMYGTDKLPKFAEDSYQTTNGWWLVSTSEIPLTYTVAGDILDAAALPIRLTAHTLCFRSEAGSAGRDTAGMLRQHQFEKVEMVSITEPDQSEAEQQRMLRCAEDILERLGLPYRTVLLCTGDMGFGARRTFDIEAWLPGQNNYREISSVSTTGDFQARRMNARYKPADGGKPQFVHTLNGSGLAVGRCLIAVLENGQQADGSVVLPPVLAGYLGGKTVLSAEGTLV</sequence>
<feature type="chain" id="PRO_1000019802" description="Serine--tRNA ligase">
    <location>
        <begin position="1"/>
        <end position="430"/>
    </location>
</feature>
<feature type="binding site" evidence="1">
    <location>
        <begin position="231"/>
        <end position="233"/>
    </location>
    <ligand>
        <name>L-serine</name>
        <dbReference type="ChEBI" id="CHEBI:33384"/>
    </ligand>
</feature>
<feature type="binding site" evidence="1">
    <location>
        <begin position="262"/>
        <end position="264"/>
    </location>
    <ligand>
        <name>ATP</name>
        <dbReference type="ChEBI" id="CHEBI:30616"/>
    </ligand>
</feature>
<feature type="binding site" evidence="1">
    <location>
        <position position="285"/>
    </location>
    <ligand>
        <name>L-serine</name>
        <dbReference type="ChEBI" id="CHEBI:33384"/>
    </ligand>
</feature>
<feature type="binding site" evidence="1">
    <location>
        <begin position="349"/>
        <end position="352"/>
    </location>
    <ligand>
        <name>ATP</name>
        <dbReference type="ChEBI" id="CHEBI:30616"/>
    </ligand>
</feature>
<feature type="binding site" evidence="1">
    <location>
        <position position="385"/>
    </location>
    <ligand>
        <name>L-serine</name>
        <dbReference type="ChEBI" id="CHEBI:33384"/>
    </ligand>
</feature>